<comment type="function">
    <text evidence="1">Catalyzes the reversible oxidation of CO(2) and methanofuran (MFR) to N-formylmethanofuran (CHO-MFR). Can only oxidize formylmethanofuran. This enzyme is oxygen-labile.</text>
</comment>
<comment type="catalytic activity">
    <reaction evidence="1">
        <text>N-formylmethanofuran + 2 oxidized [2Fe-2S]-[ferredoxin] + H2O = methanofuran + 2 reduced [2Fe-2S]-[ferredoxin] + CO2 + H(+)</text>
        <dbReference type="Rhea" id="RHEA:19841"/>
        <dbReference type="Rhea" id="RHEA-COMP:10000"/>
        <dbReference type="Rhea" id="RHEA-COMP:10001"/>
        <dbReference type="ChEBI" id="CHEBI:15377"/>
        <dbReference type="ChEBI" id="CHEBI:15378"/>
        <dbReference type="ChEBI" id="CHEBI:16526"/>
        <dbReference type="ChEBI" id="CHEBI:33737"/>
        <dbReference type="ChEBI" id="CHEBI:33738"/>
        <dbReference type="ChEBI" id="CHEBI:57727"/>
        <dbReference type="ChEBI" id="CHEBI:58151"/>
        <dbReference type="EC" id="1.2.7.12"/>
    </reaction>
</comment>
<comment type="pathway">
    <text>One-carbon metabolism; methanogenesis from CO(2); 5,10-methenyl-5,6,7,8-tetrahydromethanopterin from CO(2): step 1/3.</text>
</comment>
<comment type="subunit">
    <text>Consists of five subunits; FmdA, FmdB, FmdC, FmdD, and FmdE.</text>
</comment>
<comment type="induction">
    <text>By growth on molybdenum, under anaerobic conditions.</text>
</comment>
<comment type="similarity">
    <text evidence="2">In the N-terminal section; belongs to the FwdC/FmdC family.</text>
</comment>
<comment type="similarity">
    <text evidence="2">In the C-terminal section; belongs to the molybdenum dinucleotide binding protein family.</text>
</comment>
<protein>
    <recommendedName>
        <fullName>Molybdenum-containing formylmethanofuran dehydrogenase 1 subunit C</fullName>
        <ecNumber evidence="1">1.2.7.12</ecNumber>
    </recommendedName>
    <alternativeName>
        <fullName>Molybdenum-containing formylmethanofuran dehydrogenase I subunit C</fullName>
    </alternativeName>
</protein>
<dbReference type="EC" id="1.2.7.12" evidence="1"/>
<dbReference type="EMBL" id="AJ009689">
    <property type="protein sequence ID" value="CAA08787.1"/>
    <property type="molecule type" value="Genomic_DNA"/>
</dbReference>
<dbReference type="SMR" id="P61938"/>
<dbReference type="STRING" id="145261.MWSIV6_1311"/>
<dbReference type="UniPathway" id="UPA00640">
    <property type="reaction ID" value="UER00692"/>
</dbReference>
<dbReference type="GO" id="GO:0018493">
    <property type="term" value="F:formylmethanofuran dehydrogenase activity"/>
    <property type="evidence" value="ECO:0007669"/>
    <property type="project" value="UniProtKB-EC"/>
</dbReference>
<dbReference type="GO" id="GO:0030151">
    <property type="term" value="F:molybdenum ion binding"/>
    <property type="evidence" value="ECO:0007669"/>
    <property type="project" value="InterPro"/>
</dbReference>
<dbReference type="GO" id="GO:0043546">
    <property type="term" value="F:molybdopterin cofactor binding"/>
    <property type="evidence" value="ECO:0007669"/>
    <property type="project" value="InterPro"/>
</dbReference>
<dbReference type="GO" id="GO:0019386">
    <property type="term" value="P:methanogenesis, from carbon dioxide"/>
    <property type="evidence" value="ECO:0007669"/>
    <property type="project" value="UniProtKB-UniPathway"/>
</dbReference>
<dbReference type="CDD" id="cd00980">
    <property type="entry name" value="FwdC/FmdC"/>
    <property type="match status" value="1"/>
</dbReference>
<dbReference type="CDD" id="cd02789">
    <property type="entry name" value="MopB_CT_FmdC-FwdD"/>
    <property type="match status" value="1"/>
</dbReference>
<dbReference type="Gene3D" id="2.40.40.20">
    <property type="match status" value="1"/>
</dbReference>
<dbReference type="Gene3D" id="2.160.20.60">
    <property type="entry name" value="Glutamate synthase, alpha subunit, C-terminal domain"/>
    <property type="match status" value="1"/>
</dbReference>
<dbReference type="InterPro" id="IPR009010">
    <property type="entry name" value="Asp_de-COase-like_dom_sf"/>
</dbReference>
<dbReference type="InterPro" id="IPR041717">
    <property type="entry name" value="FmdC/FwdD_MopB-bd"/>
</dbReference>
<dbReference type="InterPro" id="IPR012048">
    <property type="entry name" value="Formylmethanofuran_DH_csu/dsu"/>
</dbReference>
<dbReference type="InterPro" id="IPR017550">
    <property type="entry name" value="Formylmethanofuran_DH_suC"/>
</dbReference>
<dbReference type="InterPro" id="IPR036485">
    <property type="entry name" value="Glu_synth_asu_C_sf"/>
</dbReference>
<dbReference type="InterPro" id="IPR006657">
    <property type="entry name" value="MoPterin_dinucl-bd_dom"/>
</dbReference>
<dbReference type="NCBIfam" id="TIGR03122">
    <property type="entry name" value="one_C_dehyd_C"/>
    <property type="match status" value="1"/>
</dbReference>
<dbReference type="PANTHER" id="PTHR39673">
    <property type="entry name" value="TUNGSTEN FORMYLMETHANOFURAN DEHYDROGENASE, SUBUNIT C (FWDC)"/>
    <property type="match status" value="1"/>
</dbReference>
<dbReference type="PANTHER" id="PTHR39673:SF5">
    <property type="entry name" value="TUNGSTEN-CONTAINING FORMYLMETHANOFURAN DEHYDROGENASE 2 SUBUNIT C"/>
    <property type="match status" value="1"/>
</dbReference>
<dbReference type="Pfam" id="PF01568">
    <property type="entry name" value="Molydop_binding"/>
    <property type="match status" value="1"/>
</dbReference>
<dbReference type="PIRSF" id="PIRSF036633">
    <property type="entry name" value="FmdC_D"/>
    <property type="match status" value="1"/>
</dbReference>
<dbReference type="SUPFAM" id="SSF50692">
    <property type="entry name" value="ADC-like"/>
    <property type="match status" value="1"/>
</dbReference>
<dbReference type="SUPFAM" id="SSF69336">
    <property type="entry name" value="Alpha subunit of glutamate synthase, C-terminal domain"/>
    <property type="match status" value="1"/>
</dbReference>
<proteinExistence type="evidence at transcript level"/>
<organism>
    <name type="scientific">Methanothermobacter wolfeii</name>
    <name type="common">Methanobacterium wolfei</name>
    <dbReference type="NCBI Taxonomy" id="145261"/>
    <lineage>
        <taxon>Archaea</taxon>
        <taxon>Methanobacteriati</taxon>
        <taxon>Methanobacteriota</taxon>
        <taxon>Methanomada group</taxon>
        <taxon>Methanobacteria</taxon>
        <taxon>Methanobacteriales</taxon>
        <taxon>Methanobacteriaceae</taxon>
        <taxon>Methanothermobacter</taxon>
    </lineage>
</organism>
<reference key="1">
    <citation type="journal article" date="1998" name="Arch. Microbiol.">
        <title>The formylmethanofuran dehydrogenase isoenzymes in Methanobacterium wolfei and Methanobacterium thermoautotrophicum: induction of the molybdenum isoenzyme by molybdate and constitutive synthesis of the tungsten isoenzyme.</title>
        <authorList>
            <person name="Hochheimer A."/>
            <person name="Hedderich R."/>
            <person name="Thauer R.K."/>
        </authorList>
    </citation>
    <scope>NUCLEOTIDE SEQUENCE [GENOMIC DNA]</scope>
</reference>
<keyword id="KW-0484">Methanogenesis</keyword>
<keyword id="KW-0560">Oxidoreductase</keyword>
<keyword id="KW-0677">Repeat</keyword>
<gene>
    <name type="primary">fmdC</name>
</gene>
<feature type="chain" id="PRO_0000144193" description="Molybdenum-containing formylmethanofuran dehydrogenase 1 subunit C">
    <location>
        <begin position="1"/>
        <end position="400"/>
    </location>
</feature>
<feature type="repeat" description="1">
    <location>
        <begin position="76"/>
        <end position="88"/>
    </location>
</feature>
<feature type="repeat" description="2">
    <location>
        <begin position="95"/>
        <end position="107"/>
    </location>
</feature>
<feature type="repeat" description="3">
    <location>
        <begin position="114"/>
        <end position="126"/>
    </location>
</feature>
<feature type="repeat" description="4">
    <location>
        <begin position="140"/>
        <end position="152"/>
    </location>
</feature>
<feature type="repeat" description="5">
    <location>
        <begin position="159"/>
        <end position="171"/>
    </location>
</feature>
<feature type="repeat" description="6">
    <location>
        <begin position="178"/>
        <end position="190"/>
    </location>
</feature>
<feature type="repeat" description="7">
    <location>
        <begin position="197"/>
        <end position="209"/>
    </location>
</feature>
<feature type="region of interest" description="7 X 13 AA repeats of [GW]-X-X-M-X-X-G-X-I-X-[IV]-X-G">
    <location>
        <begin position="76"/>
        <end position="209"/>
    </location>
</feature>
<accession>P61938</accession>
<accession>P95294</accession>
<sequence length="400" mass="43321">MGFVLVPKSDFQIPLEADTIDPICLKGWDLDEIRSLQVYEGNIKRPLGEFFEIAETSHEDQLIRIDGDVSRVKYIGSGMKSGKIIINGDVGLQLGCEMKGGEIEVNGNVSSWIGMEMHGGTIKINGNAGDYVGCAYRGEWRGMKGGKIIIQGNAGNNIGGGMMAGEIYIGGDAGNFCGIRMNGGEITVRGDAGRAPGAEMVSGIIKIHGRISSLLPGFKEISTFKEDGSLMILFKGDLSEKNPEGNLYINYNKNLHILENETDEGRVITKKGIKVIYNSGSTIREGQIIKGGNKLTDDYIDECARCCISPEDYKLLGEPENVVVSSHGNEVVLRAVEDPGIQMGTIFIPRGIWANVLTPPYTESTGSPMYKGVPVYLRKASQGERILSAEELVEEYGVGK</sequence>
<name>FMDC_METWO</name>
<evidence type="ECO:0000250" key="1">
    <source>
        <dbReference type="UniProtKB" id="Q48943"/>
    </source>
</evidence>
<evidence type="ECO:0000305" key="2"/>